<organism>
    <name type="scientific">Blepharodera discoidalis</name>
    <name type="common">Cockroach</name>
    <dbReference type="NCBI Taxonomy" id="521524"/>
    <lineage>
        <taxon>Eukaryota</taxon>
        <taxon>Metazoa</taxon>
        <taxon>Ecdysozoa</taxon>
        <taxon>Arthropoda</taxon>
        <taxon>Hexapoda</taxon>
        <taxon>Insecta</taxon>
        <taxon>Pterygota</taxon>
        <taxon>Neoptera</taxon>
        <taxon>Polyneoptera</taxon>
        <taxon>Dictyoptera</taxon>
        <taxon>Blattodea</taxon>
        <taxon>Blaberoidea</taxon>
        <taxon>Blaberidae</taxon>
        <taxon>Epilamprinae</taxon>
        <taxon>Blepharodera</taxon>
    </lineage>
</organism>
<proteinExistence type="evidence at protein level"/>
<accession>P85562</accession>
<reference evidence="4" key="1">
    <citation type="journal article" date="2009" name="BMC Evol. Biol.">
        <title>A proteomic approach for studying insect phylogeny: CAPA peptides of ancient insect taxa (Dictyoptera, Blattoptera) as a test case.</title>
        <authorList>
            <person name="Roth S."/>
            <person name="Fromm B."/>
            <person name="Gaede G."/>
            <person name="Predel R."/>
        </authorList>
    </citation>
    <scope>PROTEIN SEQUENCE</scope>
    <scope>AMIDATION AT VAL-11</scope>
    <source>
        <tissue evidence="2">Abdominal perisympathetic organs</tissue>
    </source>
</reference>
<feature type="peptide" id="PRO_0000378777" description="Periviscerokinin-2" evidence="2">
    <location>
        <begin position="1"/>
        <end position="11"/>
    </location>
</feature>
<feature type="modified residue" description="Valine amide" evidence="2">
    <location>
        <position position="11"/>
    </location>
</feature>
<dbReference type="GO" id="GO:0005576">
    <property type="term" value="C:extracellular region"/>
    <property type="evidence" value="ECO:0007669"/>
    <property type="project" value="UniProtKB-SubCell"/>
</dbReference>
<dbReference type="GO" id="GO:0007218">
    <property type="term" value="P:neuropeptide signaling pathway"/>
    <property type="evidence" value="ECO:0007669"/>
    <property type="project" value="UniProtKB-KW"/>
</dbReference>
<dbReference type="InterPro" id="IPR013231">
    <property type="entry name" value="Periviscerokinin"/>
</dbReference>
<dbReference type="Pfam" id="PF08259">
    <property type="entry name" value="Periviscerokin"/>
    <property type="match status" value="1"/>
</dbReference>
<comment type="function">
    <text evidence="4">Mediates visceral muscle contractile activity (myotropic activity).</text>
</comment>
<comment type="subcellular location">
    <subcellularLocation>
        <location evidence="4">Secreted</location>
    </subcellularLocation>
</comment>
<comment type="similarity">
    <text evidence="1">Belongs to the periviscerokinin family.</text>
</comment>
<sequence>GSSGLISMPRV</sequence>
<evidence type="ECO:0000255" key="1"/>
<evidence type="ECO:0000269" key="2">
    <source>
    </source>
</evidence>
<evidence type="ECO:0000303" key="3">
    <source>
    </source>
</evidence>
<evidence type="ECO:0000305" key="4"/>
<keyword id="KW-0027">Amidation</keyword>
<keyword id="KW-0903">Direct protein sequencing</keyword>
<keyword id="KW-0527">Neuropeptide</keyword>
<keyword id="KW-0964">Secreted</keyword>
<protein>
    <recommendedName>
        <fullName evidence="3">Periviscerokinin-2</fullName>
        <shortName evidence="3">BleDi-PVK-2</shortName>
    </recommendedName>
</protein>
<name>PVK2_BLEDI</name>